<evidence type="ECO:0000250" key="1">
    <source>
        <dbReference type="UniProtKB" id="A0A8C2LVE3"/>
    </source>
</evidence>
<evidence type="ECO:0000250" key="2">
    <source>
        <dbReference type="UniProtKB" id="Q76KB1"/>
    </source>
</evidence>
<evidence type="ECO:0000250" key="3">
    <source>
        <dbReference type="UniProtKB" id="Q7LGA3"/>
    </source>
</evidence>
<evidence type="ECO:0000250" key="4">
    <source>
        <dbReference type="UniProtKB" id="Q8R3H7"/>
    </source>
</evidence>
<evidence type="ECO:0000255" key="5"/>
<evidence type="ECO:0000305" key="6"/>
<evidence type="ECO:0000312" key="7">
    <source>
        <dbReference type="Proteomes" id="UP000186698"/>
    </source>
</evidence>
<keyword id="KW-0175">Coiled coil</keyword>
<keyword id="KW-1015">Disulfide bond</keyword>
<keyword id="KW-0325">Glycoprotein</keyword>
<keyword id="KW-0333">Golgi apparatus</keyword>
<keyword id="KW-0472">Membrane</keyword>
<keyword id="KW-1185">Reference proteome</keyword>
<keyword id="KW-0735">Signal-anchor</keyword>
<keyword id="KW-0808">Transferase</keyword>
<keyword id="KW-0812">Transmembrane</keyword>
<keyword id="KW-1133">Transmembrane helix</keyword>
<reference key="1">
    <citation type="journal article" date="1998" name="Genes Dev.">
        <title>Renal agenesis in mice homozygous for a gene trap mutation in the gene encoding heparan sulfate 2-sulfotransferase.</title>
        <authorList>
            <person name="Bullock S.L."/>
            <person name="Fletcher J.M."/>
            <person name="Beddington R.S.P."/>
            <person name="Wilson V.A."/>
        </authorList>
    </citation>
    <scope>NUCLEOTIDE SEQUENCE [MRNA]</scope>
</reference>
<reference key="2">
    <citation type="submission" date="2004-07" db="EMBL/GenBank/DDBJ databases">
        <authorList>
            <consortium name="NIH - Xenopus Gene Collection (XGC) project"/>
        </authorList>
    </citation>
    <scope>NUCLEOTIDE SEQUENCE [LARGE SCALE MRNA]</scope>
    <source>
        <tissue>Oocyte</tissue>
    </source>
</reference>
<sequence length="356" mass="41749">MGLLRIMMPPKLQLLAVLTFGVLMLFLENQIQNLEESREKLERAIARHEVREIEQRHSMDGSRQEIALDDDEDILIIYNRVPKTASTSFTNIAYDLCAKNKYHVLHINTTKNNPVMSLQDQVRFVKNVSSWREMKPGFYHGHVSFLDFTKFGVKKKPIYINVIRDPIERLVSYYYFLRFGDDYRPGLRRRKQGDKKTFDECVAAGGSDCAPEKLWLQIPFFCGHSSECWNVGSRWALDQAKYNLVNEYFLVGVTEELEDFIMLLEAALPRFFRGATELYRSGKKSHLRKTTEKKAPSKETTAKLQQSDIWKMENEFYEFALEQFQFVRAHAVREKDGELYVLAPNFFYEKIYPKSN</sequence>
<feature type="chain" id="PRO_0000207678" description="Heparan sulfate 2-O-sulfotransferase 1">
    <location>
        <begin position="1"/>
        <end position="356"/>
    </location>
</feature>
<feature type="topological domain" description="Cytoplasmic" evidence="5">
    <location>
        <begin position="1"/>
        <end position="11"/>
    </location>
</feature>
<feature type="transmembrane region" description="Helical; Signal-anchor for type II membrane protein" evidence="5">
    <location>
        <begin position="12"/>
        <end position="28"/>
    </location>
</feature>
<feature type="topological domain" description="Lumenal" evidence="5">
    <location>
        <begin position="29"/>
        <end position="356"/>
    </location>
</feature>
<feature type="coiled-coil region" evidence="5">
    <location>
        <begin position="24"/>
        <end position="51"/>
    </location>
</feature>
<feature type="active site" evidence="2">
    <location>
        <position position="140"/>
    </location>
</feature>
<feature type="active site" evidence="1">
    <location>
        <position position="142"/>
    </location>
</feature>
<feature type="binding site" evidence="2">
    <location>
        <position position="83"/>
    </location>
    <ligand>
        <name>adenosine 3',5'-bisphosphate</name>
        <dbReference type="ChEBI" id="CHEBI:58343"/>
    </ligand>
</feature>
<feature type="binding site" evidence="2">
    <location>
        <position position="84"/>
    </location>
    <ligand>
        <name>adenosine 3',5'-bisphosphate</name>
        <dbReference type="ChEBI" id="CHEBI:58343"/>
    </ligand>
</feature>
<feature type="binding site" evidence="2">
    <location>
        <position position="85"/>
    </location>
    <ligand>
        <name>adenosine 3',5'-bisphosphate</name>
        <dbReference type="ChEBI" id="CHEBI:58343"/>
    </ligand>
</feature>
<feature type="binding site" evidence="2">
    <location>
        <position position="86"/>
    </location>
    <ligand>
        <name>adenosine 3',5'-bisphosphate</name>
        <dbReference type="ChEBI" id="CHEBI:58343"/>
    </ligand>
</feature>
<feature type="binding site" evidence="2">
    <location>
        <position position="87"/>
    </location>
    <ligand>
        <name>adenosine 3',5'-bisphosphate</name>
        <dbReference type="ChEBI" id="CHEBI:58343"/>
    </ligand>
</feature>
<feature type="binding site" evidence="2">
    <location>
        <position position="88"/>
    </location>
    <ligand>
        <name>adenosine 3',5'-bisphosphate</name>
        <dbReference type="ChEBI" id="CHEBI:58343"/>
    </ligand>
</feature>
<feature type="binding site" evidence="2">
    <location>
        <position position="164"/>
    </location>
    <ligand>
        <name>adenosine 3',5'-bisphosphate</name>
        <dbReference type="ChEBI" id="CHEBI:58343"/>
    </ligand>
</feature>
<feature type="binding site" evidence="2">
    <location>
        <position position="172"/>
    </location>
    <ligand>
        <name>adenosine 3',5'-bisphosphate</name>
        <dbReference type="ChEBI" id="CHEBI:58343"/>
    </ligand>
</feature>
<feature type="binding site" evidence="2">
    <location>
        <position position="279"/>
    </location>
    <ligand>
        <name>adenosine 3',5'-bisphosphate</name>
        <dbReference type="ChEBI" id="CHEBI:58343"/>
    </ligand>
</feature>
<feature type="binding site" evidence="2">
    <location>
        <position position="285"/>
    </location>
    <ligand>
        <name>adenosine 3',5'-bisphosphate</name>
        <dbReference type="ChEBI" id="CHEBI:58343"/>
    </ligand>
</feature>
<feature type="binding site" evidence="2">
    <location>
        <position position="290"/>
    </location>
    <ligand>
        <name>adenosine 3',5'-bisphosphate</name>
        <dbReference type="ChEBI" id="CHEBI:58343"/>
    </ligand>
</feature>
<feature type="binding site" evidence="2">
    <location>
        <position position="293"/>
    </location>
    <ligand>
        <name>adenosine 3',5'-bisphosphate</name>
        <dbReference type="ChEBI" id="CHEBI:58343"/>
    </ligand>
</feature>
<feature type="glycosylation site" description="N-linked (GlcNAc...) asparagine" evidence="5">
    <location>
        <position position="108"/>
    </location>
</feature>
<feature type="glycosylation site" description="N-linked (GlcNAc...) asparagine" evidence="5">
    <location>
        <position position="127"/>
    </location>
</feature>
<feature type="disulfide bond" evidence="2">
    <location>
        <begin position="201"/>
        <end position="209"/>
    </location>
</feature>
<feature type="disulfide bond" evidence="2">
    <location>
        <begin position="222"/>
        <end position="228"/>
    </location>
</feature>
<comment type="function">
    <text evidence="2">Catalyzes the transfer of a sulfo group from 3'-phospho-5'-adenylyl sulfate (PAPS) to the 2-OH position of iduronic acid (IdoA) or glucuronic acid (GlcA) within the heparan sulfate (HS) chain and participates in HS biosynthesis.</text>
</comment>
<comment type="subunit">
    <text evidence="2">Homotrimer.</text>
</comment>
<comment type="subcellular location">
    <subcellularLocation>
        <location evidence="4">Golgi apparatus membrane</location>
        <topology evidence="4">Single-pass type II membrane protein</topology>
    </subcellularLocation>
</comment>
<comment type="similarity">
    <text evidence="6">Belongs to the sulfotransferase 3 family.</text>
</comment>
<organism evidence="7">
    <name type="scientific">Xenopus laevis</name>
    <name type="common">African clawed frog</name>
    <dbReference type="NCBI Taxonomy" id="8355"/>
    <lineage>
        <taxon>Eukaryota</taxon>
        <taxon>Metazoa</taxon>
        <taxon>Chordata</taxon>
        <taxon>Craniata</taxon>
        <taxon>Vertebrata</taxon>
        <taxon>Euteleostomi</taxon>
        <taxon>Amphibia</taxon>
        <taxon>Batrachia</taxon>
        <taxon>Anura</taxon>
        <taxon>Pipoidea</taxon>
        <taxon>Pipidae</taxon>
        <taxon>Xenopodinae</taxon>
        <taxon>Xenopus</taxon>
        <taxon>Xenopus</taxon>
    </lineage>
</organism>
<name>HS2ST_XENLA</name>
<protein>
    <recommendedName>
        <fullName evidence="3">Heparan sulfate 2-O-sulfotransferase 1</fullName>
        <ecNumber evidence="4">2.8.2.-</ecNumber>
    </recommendedName>
    <alternativeName>
        <fullName evidence="4">2-O-sulfotransferase</fullName>
        <shortName evidence="4">2-OST</shortName>
        <shortName evidence="2">2OST</shortName>
    </alternativeName>
    <alternativeName>
        <fullName evidence="4">HS 2-O-sulfotransferase</fullName>
    </alternativeName>
    <alternativeName>
        <fullName evidence="4">Heparan sulfate 2-sulfotransferase</fullName>
    </alternativeName>
</protein>
<accession>O93336</accession>
<proteinExistence type="evidence at transcript level"/>
<dbReference type="EC" id="2.8.2.-" evidence="4"/>
<dbReference type="EMBL" id="AF060179">
    <property type="protein sequence ID" value="AAC41301.1"/>
    <property type="molecule type" value="mRNA"/>
</dbReference>
<dbReference type="EMBL" id="BC078097">
    <property type="protein sequence ID" value="AAH78097.1"/>
    <property type="molecule type" value="mRNA"/>
</dbReference>
<dbReference type="RefSeq" id="NP_001083748.1">
    <property type="nucleotide sequence ID" value="NM_001090279.1"/>
</dbReference>
<dbReference type="SMR" id="O93336"/>
<dbReference type="GlyCosmos" id="O93336">
    <property type="glycosylation" value="2 sites, No reported glycans"/>
</dbReference>
<dbReference type="DNASU" id="399095"/>
<dbReference type="GeneID" id="399095"/>
<dbReference type="KEGG" id="xla:399095"/>
<dbReference type="AGR" id="Xenbase:XB-GENE-5953205"/>
<dbReference type="CTD" id="399095"/>
<dbReference type="Xenbase" id="XB-GENE-5953205">
    <property type="gene designation" value="hs2st1.L"/>
</dbReference>
<dbReference type="OMA" id="PNQIQFV"/>
<dbReference type="OrthoDB" id="10019582at2759"/>
<dbReference type="Proteomes" id="UP000186698">
    <property type="component" value="Chromosome 4L"/>
</dbReference>
<dbReference type="Bgee" id="399095">
    <property type="expression patterns" value="Expressed in blastula and 19 other cell types or tissues"/>
</dbReference>
<dbReference type="GO" id="GO:0000139">
    <property type="term" value="C:Golgi membrane"/>
    <property type="evidence" value="ECO:0007669"/>
    <property type="project" value="UniProtKB-SubCell"/>
</dbReference>
<dbReference type="GO" id="GO:0004394">
    <property type="term" value="F:heparan sulfate 2-sulfotransferase activity"/>
    <property type="evidence" value="ECO:0000318"/>
    <property type="project" value="GO_Central"/>
</dbReference>
<dbReference type="FunFam" id="3.40.50.300:FF:000534">
    <property type="entry name" value="Heparan sulfate 2-O-sulfotransferase 1"/>
    <property type="match status" value="1"/>
</dbReference>
<dbReference type="Gene3D" id="3.40.50.300">
    <property type="entry name" value="P-loop containing nucleotide triphosphate hydrolases"/>
    <property type="match status" value="1"/>
</dbReference>
<dbReference type="InterPro" id="IPR007734">
    <property type="entry name" value="Heparan_SO4_2-O-STrfase"/>
</dbReference>
<dbReference type="InterPro" id="IPR027417">
    <property type="entry name" value="P-loop_NTPase"/>
</dbReference>
<dbReference type="InterPro" id="IPR005331">
    <property type="entry name" value="Sulfotransferase"/>
</dbReference>
<dbReference type="PANTHER" id="PTHR12129">
    <property type="entry name" value="HEPARAN SULFATE 2-O-SULFOTRANSFERASE"/>
    <property type="match status" value="1"/>
</dbReference>
<dbReference type="PANTHER" id="PTHR12129:SF17">
    <property type="entry name" value="HEPARAN SULFATE 2-O-SULFOTRANSFERASE 1"/>
    <property type="match status" value="1"/>
</dbReference>
<dbReference type="Pfam" id="PF03567">
    <property type="entry name" value="Sulfotransfer_2"/>
    <property type="match status" value="1"/>
</dbReference>
<dbReference type="SUPFAM" id="SSF52540">
    <property type="entry name" value="P-loop containing nucleoside triphosphate hydrolases"/>
    <property type="match status" value="1"/>
</dbReference>
<gene>
    <name evidence="3" type="primary">hs2st1</name>
    <name type="synonym">hs2st</name>
</gene>